<organism>
    <name type="scientific">Prochlorococcus marinus (strain MIT 9303)</name>
    <dbReference type="NCBI Taxonomy" id="59922"/>
    <lineage>
        <taxon>Bacteria</taxon>
        <taxon>Bacillati</taxon>
        <taxon>Cyanobacteriota</taxon>
        <taxon>Cyanophyceae</taxon>
        <taxon>Synechococcales</taxon>
        <taxon>Prochlorococcaceae</taxon>
        <taxon>Prochlorococcus</taxon>
    </lineage>
</organism>
<gene>
    <name evidence="1" type="primary">tsaD</name>
    <name type="synonym">gcp</name>
    <name type="ordered locus">P9303_06711</name>
</gene>
<feature type="chain" id="PRO_0000303480" description="tRNA N6-adenosine threonylcarbamoyltransferase">
    <location>
        <begin position="1"/>
        <end position="356"/>
    </location>
</feature>
<feature type="binding site" evidence="1">
    <location>
        <position position="115"/>
    </location>
    <ligand>
        <name>Fe cation</name>
        <dbReference type="ChEBI" id="CHEBI:24875"/>
    </ligand>
</feature>
<feature type="binding site" evidence="1">
    <location>
        <position position="119"/>
    </location>
    <ligand>
        <name>Fe cation</name>
        <dbReference type="ChEBI" id="CHEBI:24875"/>
    </ligand>
</feature>
<feature type="binding site" evidence="1">
    <location>
        <begin position="138"/>
        <end position="142"/>
    </location>
    <ligand>
        <name>substrate</name>
    </ligand>
</feature>
<feature type="binding site" evidence="1">
    <location>
        <position position="171"/>
    </location>
    <ligand>
        <name>substrate</name>
    </ligand>
</feature>
<feature type="binding site" evidence="1">
    <location>
        <position position="184"/>
    </location>
    <ligand>
        <name>substrate</name>
    </ligand>
</feature>
<feature type="binding site" evidence="1">
    <location>
        <position position="283"/>
    </location>
    <ligand>
        <name>substrate</name>
    </ligand>
</feature>
<feature type="binding site" evidence="1">
    <location>
        <position position="311"/>
    </location>
    <ligand>
        <name>Fe cation</name>
        <dbReference type="ChEBI" id="CHEBI:24875"/>
    </ligand>
</feature>
<dbReference type="EC" id="2.3.1.234" evidence="1"/>
<dbReference type="EMBL" id="CP000554">
    <property type="protein sequence ID" value="ABM77422.1"/>
    <property type="molecule type" value="Genomic_DNA"/>
</dbReference>
<dbReference type="RefSeq" id="WP_011825339.1">
    <property type="nucleotide sequence ID" value="NC_008820.1"/>
</dbReference>
<dbReference type="SMR" id="A2C7G2"/>
<dbReference type="STRING" id="59922.P9303_06711"/>
<dbReference type="KEGG" id="pmf:P9303_06711"/>
<dbReference type="HOGENOM" id="CLU_023208_0_2_3"/>
<dbReference type="BioCyc" id="PMAR59922:G1G80-618-MONOMER"/>
<dbReference type="Proteomes" id="UP000002274">
    <property type="component" value="Chromosome"/>
</dbReference>
<dbReference type="GO" id="GO:0005737">
    <property type="term" value="C:cytoplasm"/>
    <property type="evidence" value="ECO:0007669"/>
    <property type="project" value="UniProtKB-SubCell"/>
</dbReference>
<dbReference type="GO" id="GO:0005506">
    <property type="term" value="F:iron ion binding"/>
    <property type="evidence" value="ECO:0007669"/>
    <property type="project" value="UniProtKB-UniRule"/>
</dbReference>
<dbReference type="GO" id="GO:0061711">
    <property type="term" value="F:N(6)-L-threonylcarbamoyladenine synthase activity"/>
    <property type="evidence" value="ECO:0007669"/>
    <property type="project" value="UniProtKB-EC"/>
</dbReference>
<dbReference type="GO" id="GO:0002949">
    <property type="term" value="P:tRNA threonylcarbamoyladenosine modification"/>
    <property type="evidence" value="ECO:0007669"/>
    <property type="project" value="UniProtKB-UniRule"/>
</dbReference>
<dbReference type="CDD" id="cd24133">
    <property type="entry name" value="ASKHA_NBD_TsaD_bac"/>
    <property type="match status" value="1"/>
</dbReference>
<dbReference type="FunFam" id="3.30.420.40:FF:000012">
    <property type="entry name" value="tRNA N6-adenosine threonylcarbamoyltransferase"/>
    <property type="match status" value="1"/>
</dbReference>
<dbReference type="FunFam" id="3.30.420.40:FF:000040">
    <property type="entry name" value="tRNA N6-adenosine threonylcarbamoyltransferase"/>
    <property type="match status" value="1"/>
</dbReference>
<dbReference type="Gene3D" id="3.30.420.40">
    <property type="match status" value="2"/>
</dbReference>
<dbReference type="HAMAP" id="MF_01445">
    <property type="entry name" value="TsaD"/>
    <property type="match status" value="1"/>
</dbReference>
<dbReference type="InterPro" id="IPR043129">
    <property type="entry name" value="ATPase_NBD"/>
</dbReference>
<dbReference type="InterPro" id="IPR000905">
    <property type="entry name" value="Gcp-like_dom"/>
</dbReference>
<dbReference type="InterPro" id="IPR017861">
    <property type="entry name" value="KAE1/TsaD"/>
</dbReference>
<dbReference type="InterPro" id="IPR022450">
    <property type="entry name" value="TsaD"/>
</dbReference>
<dbReference type="NCBIfam" id="TIGR00329">
    <property type="entry name" value="gcp_kae1"/>
    <property type="match status" value="1"/>
</dbReference>
<dbReference type="NCBIfam" id="TIGR03723">
    <property type="entry name" value="T6A_TsaD_YgjD"/>
    <property type="match status" value="1"/>
</dbReference>
<dbReference type="PANTHER" id="PTHR11735">
    <property type="entry name" value="TRNA N6-ADENOSINE THREONYLCARBAMOYLTRANSFERASE"/>
    <property type="match status" value="1"/>
</dbReference>
<dbReference type="PANTHER" id="PTHR11735:SF6">
    <property type="entry name" value="TRNA N6-ADENOSINE THREONYLCARBAMOYLTRANSFERASE, MITOCHONDRIAL"/>
    <property type="match status" value="1"/>
</dbReference>
<dbReference type="Pfam" id="PF00814">
    <property type="entry name" value="TsaD"/>
    <property type="match status" value="1"/>
</dbReference>
<dbReference type="PRINTS" id="PR00789">
    <property type="entry name" value="OSIALOPTASE"/>
</dbReference>
<dbReference type="SUPFAM" id="SSF53067">
    <property type="entry name" value="Actin-like ATPase domain"/>
    <property type="match status" value="2"/>
</dbReference>
<name>TSAD_PROM3</name>
<evidence type="ECO:0000255" key="1">
    <source>
        <dbReference type="HAMAP-Rule" id="MF_01445"/>
    </source>
</evidence>
<protein>
    <recommendedName>
        <fullName evidence="1">tRNA N6-adenosine threonylcarbamoyltransferase</fullName>
        <ecNumber evidence="1">2.3.1.234</ecNumber>
    </recommendedName>
    <alternativeName>
        <fullName evidence="1">N6-L-threonylcarbamoyladenine synthase</fullName>
        <shortName evidence="1">t(6)A synthase</shortName>
    </alternativeName>
    <alternativeName>
        <fullName evidence="1">t(6)A37 threonylcarbamoyladenosine biosynthesis protein TsaD</fullName>
    </alternativeName>
    <alternativeName>
        <fullName evidence="1">tRNA threonylcarbamoyladenosine biosynthesis protein TsaD</fullName>
    </alternativeName>
</protein>
<comment type="function">
    <text evidence="1">Required for the formation of a threonylcarbamoyl group on adenosine at position 37 (t(6)A37) in tRNAs that read codons beginning with adenine. Is involved in the transfer of the threonylcarbamoyl moiety of threonylcarbamoyl-AMP (TC-AMP) to the N6 group of A37, together with TsaE and TsaB. TsaD likely plays a direct catalytic role in this reaction.</text>
</comment>
<comment type="catalytic activity">
    <reaction evidence="1">
        <text>L-threonylcarbamoyladenylate + adenosine(37) in tRNA = N(6)-L-threonylcarbamoyladenosine(37) in tRNA + AMP + H(+)</text>
        <dbReference type="Rhea" id="RHEA:37059"/>
        <dbReference type="Rhea" id="RHEA-COMP:10162"/>
        <dbReference type="Rhea" id="RHEA-COMP:10163"/>
        <dbReference type="ChEBI" id="CHEBI:15378"/>
        <dbReference type="ChEBI" id="CHEBI:73682"/>
        <dbReference type="ChEBI" id="CHEBI:74411"/>
        <dbReference type="ChEBI" id="CHEBI:74418"/>
        <dbReference type="ChEBI" id="CHEBI:456215"/>
        <dbReference type="EC" id="2.3.1.234"/>
    </reaction>
</comment>
<comment type="cofactor">
    <cofactor evidence="1">
        <name>Fe(2+)</name>
        <dbReference type="ChEBI" id="CHEBI:29033"/>
    </cofactor>
    <text evidence="1">Binds 1 Fe(2+) ion per subunit.</text>
</comment>
<comment type="subcellular location">
    <subcellularLocation>
        <location evidence="1">Cytoplasm</location>
    </subcellularLocation>
</comment>
<comment type="similarity">
    <text evidence="1">Belongs to the KAE1 / TsaD family.</text>
</comment>
<keyword id="KW-0012">Acyltransferase</keyword>
<keyword id="KW-0963">Cytoplasm</keyword>
<keyword id="KW-0408">Iron</keyword>
<keyword id="KW-0479">Metal-binding</keyword>
<keyword id="KW-0808">Transferase</keyword>
<keyword id="KW-0819">tRNA processing</keyword>
<accession>A2C7G2</accession>
<reference key="1">
    <citation type="journal article" date="2007" name="PLoS Genet.">
        <title>Patterns and implications of gene gain and loss in the evolution of Prochlorococcus.</title>
        <authorList>
            <person name="Kettler G.C."/>
            <person name="Martiny A.C."/>
            <person name="Huang K."/>
            <person name="Zucker J."/>
            <person name="Coleman M.L."/>
            <person name="Rodrigue S."/>
            <person name="Chen F."/>
            <person name="Lapidus A."/>
            <person name="Ferriera S."/>
            <person name="Johnson J."/>
            <person name="Steglich C."/>
            <person name="Church G.M."/>
            <person name="Richardson P."/>
            <person name="Chisholm S.W."/>
        </authorList>
    </citation>
    <scope>NUCLEOTIDE SEQUENCE [LARGE SCALE GENOMIC DNA]</scope>
    <source>
        <strain>MIT 9303</strain>
    </source>
</reference>
<sequence length="356" mass="37484">MPTVLALETSCDESAAAVLRLNNGCLQVIASRIASQVEKHAQWGGVVPEVASRLHVEALPHLVEEVLQEAGQSMARFDAVAATVTPGLAGALMVGSVTGRCLAALHALPFFGIHHLEGHLASVLLAEHPPRPPYLVLLVSGGHTELIRVGAESEMVRLGRSHDDAAGEAFDKVGRLLGLAYPGGPAIQALAAAGDSGRFSLPKGRVSKPGGGFHPYDFSFSGLKTAMLRLVQALSEAGEDLPRADLAASFEQVVADVLVERSLLCANDQGLKTVVMVGGVAANRRLRELMSKRGQEQGIEVHTAPLRYCTDNAAMIGAAALQRLVSGDDASSLELGVAARWPLDKTEDLYHSPPPF</sequence>
<proteinExistence type="inferred from homology"/>